<proteinExistence type="inferred from homology"/>
<keyword id="KW-0963">Cytoplasm</keyword>
<keyword id="KW-0378">Hydrolase</keyword>
<sequence length="100" mass="11170">MRLTKREQEKMMISLAGMIAEKRKDRGLKLNQPEAVALITSRLLEGARDGKTVGELMNEGATWLTKDDVMEGIPEMIPMIQVEATFPDGTKLITVTDPIR</sequence>
<organism>
    <name type="scientific">Limosilactobacillus fermentum</name>
    <name type="common">Lactobacillus fermentum</name>
    <dbReference type="NCBI Taxonomy" id="1613"/>
    <lineage>
        <taxon>Bacteria</taxon>
        <taxon>Bacillati</taxon>
        <taxon>Bacillota</taxon>
        <taxon>Bacilli</taxon>
        <taxon>Lactobacillales</taxon>
        <taxon>Lactobacillaceae</taxon>
        <taxon>Limosilactobacillus</taxon>
    </lineage>
</organism>
<accession>P26931</accession>
<feature type="chain" id="PRO_0000098017" description="Urease subunit gamma">
    <location>
        <begin position="1"/>
        <end position="100"/>
    </location>
</feature>
<dbReference type="EC" id="3.5.1.5" evidence="1"/>
<dbReference type="EMBL" id="D10605">
    <property type="protein sequence ID" value="BAA01458.1"/>
    <property type="molecule type" value="Genomic_DNA"/>
</dbReference>
<dbReference type="SMR" id="P26931"/>
<dbReference type="UniPathway" id="UPA00258">
    <property type="reaction ID" value="UER00370"/>
</dbReference>
<dbReference type="GO" id="GO:0005737">
    <property type="term" value="C:cytoplasm"/>
    <property type="evidence" value="ECO:0007669"/>
    <property type="project" value="UniProtKB-SubCell"/>
</dbReference>
<dbReference type="GO" id="GO:0016151">
    <property type="term" value="F:nickel cation binding"/>
    <property type="evidence" value="ECO:0007669"/>
    <property type="project" value="InterPro"/>
</dbReference>
<dbReference type="GO" id="GO:0009039">
    <property type="term" value="F:urease activity"/>
    <property type="evidence" value="ECO:0007669"/>
    <property type="project" value="UniProtKB-UniRule"/>
</dbReference>
<dbReference type="GO" id="GO:0043419">
    <property type="term" value="P:urea catabolic process"/>
    <property type="evidence" value="ECO:0007669"/>
    <property type="project" value="UniProtKB-UniRule"/>
</dbReference>
<dbReference type="CDD" id="cd00390">
    <property type="entry name" value="Urease_gamma"/>
    <property type="match status" value="1"/>
</dbReference>
<dbReference type="Gene3D" id="3.30.280.10">
    <property type="entry name" value="Urease, gamma-like subunit"/>
    <property type="match status" value="1"/>
</dbReference>
<dbReference type="HAMAP" id="MF_00739">
    <property type="entry name" value="Urease_gamma"/>
    <property type="match status" value="1"/>
</dbReference>
<dbReference type="InterPro" id="IPR012010">
    <property type="entry name" value="Urease_gamma"/>
</dbReference>
<dbReference type="InterPro" id="IPR002026">
    <property type="entry name" value="Urease_gamma/gamma-beta_su"/>
</dbReference>
<dbReference type="InterPro" id="IPR036463">
    <property type="entry name" value="Urease_gamma_sf"/>
</dbReference>
<dbReference type="InterPro" id="IPR050069">
    <property type="entry name" value="Urease_subunit"/>
</dbReference>
<dbReference type="NCBIfam" id="NF009712">
    <property type="entry name" value="PRK13241.1"/>
    <property type="match status" value="1"/>
</dbReference>
<dbReference type="NCBIfam" id="TIGR00193">
    <property type="entry name" value="urease_gam"/>
    <property type="match status" value="1"/>
</dbReference>
<dbReference type="PANTHER" id="PTHR33569">
    <property type="entry name" value="UREASE"/>
    <property type="match status" value="1"/>
</dbReference>
<dbReference type="PANTHER" id="PTHR33569:SF1">
    <property type="entry name" value="UREASE"/>
    <property type="match status" value="1"/>
</dbReference>
<dbReference type="Pfam" id="PF00547">
    <property type="entry name" value="Urease_gamma"/>
    <property type="match status" value="1"/>
</dbReference>
<dbReference type="PIRSF" id="PIRSF001223">
    <property type="entry name" value="Urease_gamma"/>
    <property type="match status" value="1"/>
</dbReference>
<dbReference type="SUPFAM" id="SSF54111">
    <property type="entry name" value="Urease, gamma-subunit"/>
    <property type="match status" value="1"/>
</dbReference>
<gene>
    <name evidence="1" type="primary">ureA</name>
</gene>
<protein>
    <recommendedName>
        <fullName evidence="1">Urease subunit gamma</fullName>
        <ecNumber evidence="1">3.5.1.5</ecNumber>
    </recommendedName>
    <alternativeName>
        <fullName evidence="1">Urea amidohydrolase subunit gamma</fullName>
    </alternativeName>
</protein>
<name>URE3_LIMFE</name>
<evidence type="ECO:0000255" key="1">
    <source>
        <dbReference type="HAMAP-Rule" id="MF_00739"/>
    </source>
</evidence>
<comment type="catalytic activity">
    <reaction evidence="1">
        <text>urea + 2 H2O + H(+) = hydrogencarbonate + 2 NH4(+)</text>
        <dbReference type="Rhea" id="RHEA:20557"/>
        <dbReference type="ChEBI" id="CHEBI:15377"/>
        <dbReference type="ChEBI" id="CHEBI:15378"/>
        <dbReference type="ChEBI" id="CHEBI:16199"/>
        <dbReference type="ChEBI" id="CHEBI:17544"/>
        <dbReference type="ChEBI" id="CHEBI:28938"/>
        <dbReference type="EC" id="3.5.1.5"/>
    </reaction>
</comment>
<comment type="pathway">
    <text evidence="1">Nitrogen metabolism; urea degradation; CO(2) and NH(3) from urea (urease route): step 1/1.</text>
</comment>
<comment type="subunit">
    <text evidence="1">Heterotrimer of UreA (gamma), UreB (beta) and UreC (alpha) subunits. Three heterotrimers associate to form the active enzyme.</text>
</comment>
<comment type="subcellular location">
    <subcellularLocation>
        <location evidence="1">Cytoplasm</location>
    </subcellularLocation>
</comment>
<comment type="similarity">
    <text evidence="1">Belongs to the urease gamma subunit family.</text>
</comment>
<reference key="1">
    <citation type="submission" date="1992-03" db="EMBL/GenBank/DDBJ databases">
        <title>Nucleotide sequence of acid urease gene from Lactobacillus fermentum JCM5869.</title>
        <authorList>
            <person name="Suzuki K."/>
            <person name="Takahashi M."/>
            <person name="Imamura S."/>
            <person name="Ishikawa T."/>
        </authorList>
    </citation>
    <scope>NUCLEOTIDE SEQUENCE [GENOMIC DNA]</scope>
    <source>
        <strain>NBRC 14513 / JCM 5869 / F-5</strain>
    </source>
</reference>